<reference key="1">
    <citation type="journal article" date="2002" name="J. Bacteriol.">
        <title>Whole-genome comparison of Mycobacterium tuberculosis clinical and laboratory strains.</title>
        <authorList>
            <person name="Fleischmann R.D."/>
            <person name="Alland D."/>
            <person name="Eisen J.A."/>
            <person name="Carpenter L."/>
            <person name="White O."/>
            <person name="Peterson J.D."/>
            <person name="DeBoy R.T."/>
            <person name="Dodson R.J."/>
            <person name="Gwinn M.L."/>
            <person name="Haft D.H."/>
            <person name="Hickey E.K."/>
            <person name="Kolonay J.F."/>
            <person name="Nelson W.C."/>
            <person name="Umayam L.A."/>
            <person name="Ermolaeva M.D."/>
            <person name="Salzberg S.L."/>
            <person name="Delcher A."/>
            <person name="Utterback T.R."/>
            <person name="Weidman J.F."/>
            <person name="Khouri H.M."/>
            <person name="Gill J."/>
            <person name="Mikula A."/>
            <person name="Bishai W."/>
            <person name="Jacobs W.R. Jr."/>
            <person name="Venter J.C."/>
            <person name="Fraser C.M."/>
        </authorList>
    </citation>
    <scope>NUCLEOTIDE SEQUENCE [LARGE SCALE GENOMIC DNA]</scope>
    <source>
        <strain>CDC 1551 / Oshkosh</strain>
    </source>
</reference>
<accession>P9WMF6</accession>
<accession>L0T6H5</accession>
<accession>O53712</accession>
<organism>
    <name type="scientific">Mycobacterium tuberculosis (strain CDC 1551 / Oshkosh)</name>
    <dbReference type="NCBI Taxonomy" id="83331"/>
    <lineage>
        <taxon>Bacteria</taxon>
        <taxon>Bacillati</taxon>
        <taxon>Actinomycetota</taxon>
        <taxon>Actinomycetes</taxon>
        <taxon>Mycobacteriales</taxon>
        <taxon>Mycobacteriaceae</taxon>
        <taxon>Mycobacterium</taxon>
        <taxon>Mycobacterium tuberculosis complex</taxon>
    </lineage>
</organism>
<comment type="similarity">
    <text evidence="2">Belongs to the LysR transcriptional regulatory family.</text>
</comment>
<feature type="chain" id="PRO_0000427312" description="Uncharacterized HTH-type transcriptional regulator MT0391">
    <location>
        <begin position="1"/>
        <end position="321"/>
    </location>
</feature>
<feature type="domain" description="HTH lysR-type" evidence="1">
    <location>
        <begin position="1"/>
        <end position="58"/>
    </location>
</feature>
<feature type="DNA-binding region" description="H-T-H motif" evidence="1">
    <location>
        <begin position="18"/>
        <end position="37"/>
    </location>
</feature>
<name>Y377_MYCTO</name>
<evidence type="ECO:0000255" key="1">
    <source>
        <dbReference type="PROSITE-ProRule" id="PRU00253"/>
    </source>
</evidence>
<evidence type="ECO:0000305" key="2"/>
<proteinExistence type="inferred from homology"/>
<keyword id="KW-0238">DNA-binding</keyword>
<keyword id="KW-1185">Reference proteome</keyword>
<keyword id="KW-0804">Transcription</keyword>
<keyword id="KW-0805">Transcription regulation</keyword>
<protein>
    <recommendedName>
        <fullName>Uncharacterized HTH-type transcriptional regulator MT0391</fullName>
    </recommendedName>
</protein>
<gene>
    <name type="ordered locus">MT0391</name>
</gene>
<dbReference type="EMBL" id="AE000516">
    <property type="protein sequence ID" value="AAK44613.1"/>
    <property type="molecule type" value="Genomic_DNA"/>
</dbReference>
<dbReference type="PIR" id="D70833">
    <property type="entry name" value="D70833"/>
</dbReference>
<dbReference type="RefSeq" id="WP_003898421.1">
    <property type="nucleotide sequence ID" value="NZ_KK341227.1"/>
</dbReference>
<dbReference type="SMR" id="P9WMF6"/>
<dbReference type="KEGG" id="mtc:MT0391"/>
<dbReference type="PATRIC" id="fig|83331.31.peg.416"/>
<dbReference type="HOGENOM" id="CLU_076586_0_0_11"/>
<dbReference type="Proteomes" id="UP000001020">
    <property type="component" value="Chromosome"/>
</dbReference>
<dbReference type="GO" id="GO:0003700">
    <property type="term" value="F:DNA-binding transcription factor activity"/>
    <property type="evidence" value="ECO:0007669"/>
    <property type="project" value="InterPro"/>
</dbReference>
<dbReference type="GO" id="GO:0000976">
    <property type="term" value="F:transcription cis-regulatory region binding"/>
    <property type="evidence" value="ECO:0007669"/>
    <property type="project" value="TreeGrafter"/>
</dbReference>
<dbReference type="Gene3D" id="3.40.190.290">
    <property type="match status" value="1"/>
</dbReference>
<dbReference type="Gene3D" id="1.10.10.10">
    <property type="entry name" value="Winged helix-like DNA-binding domain superfamily/Winged helix DNA-binding domain"/>
    <property type="match status" value="1"/>
</dbReference>
<dbReference type="InterPro" id="IPR005119">
    <property type="entry name" value="LysR_subst-bd"/>
</dbReference>
<dbReference type="InterPro" id="IPR000847">
    <property type="entry name" value="Tscrpt_reg_HTH_LysR"/>
</dbReference>
<dbReference type="InterPro" id="IPR036388">
    <property type="entry name" value="WH-like_DNA-bd_sf"/>
</dbReference>
<dbReference type="InterPro" id="IPR036390">
    <property type="entry name" value="WH_DNA-bd_sf"/>
</dbReference>
<dbReference type="PANTHER" id="PTHR30126">
    <property type="entry name" value="HTH-TYPE TRANSCRIPTIONAL REGULATOR"/>
    <property type="match status" value="1"/>
</dbReference>
<dbReference type="PANTHER" id="PTHR30126:SF39">
    <property type="entry name" value="HTH-TYPE TRANSCRIPTIONAL REGULATOR CYSL"/>
    <property type="match status" value="1"/>
</dbReference>
<dbReference type="Pfam" id="PF00126">
    <property type="entry name" value="HTH_1"/>
    <property type="match status" value="1"/>
</dbReference>
<dbReference type="Pfam" id="PF03466">
    <property type="entry name" value="LysR_substrate"/>
    <property type="match status" value="1"/>
</dbReference>
<dbReference type="SUPFAM" id="SSF53850">
    <property type="entry name" value="Periplasmic binding protein-like II"/>
    <property type="match status" value="1"/>
</dbReference>
<dbReference type="SUPFAM" id="SSF46785">
    <property type="entry name" value="Winged helix' DNA-binding domain"/>
    <property type="match status" value="1"/>
</dbReference>
<dbReference type="PROSITE" id="PS50931">
    <property type="entry name" value="HTH_LYSR"/>
    <property type="match status" value="1"/>
</dbReference>
<sequence>MTPAQLRAYSAVVRLGSVRAAAAELGLSDAGVSMHVAALRKELDDPLFTRTGAGLAFTPGGLRLASRAVEILGLQQQTAIEVTEAAHGRRLLRIAASSAFAEHAAPGLIELFSSRADDLSVELSVHPTSRFRELICSRAVDIAIGPASESSIGSDGSIFLRPFLKYQIITVVAPNSPLAAGIPMPALLRHQQWMLGPSAGSVDGEIATMLRGLAIPESQQRIFQSDAAALEEVMRVGGATLAIGFAVAKDLAAGRLVHVTGPGLDRAGEWCVATLAPSARQPAVSELVGFISTPRCIQAMIPGSGVGVTRFRPKVHVTLWS</sequence>